<organism>
    <name type="scientific">Staphylococcus aureus (strain USA300 / TCH1516)</name>
    <dbReference type="NCBI Taxonomy" id="451516"/>
    <lineage>
        <taxon>Bacteria</taxon>
        <taxon>Bacillati</taxon>
        <taxon>Bacillota</taxon>
        <taxon>Bacilli</taxon>
        <taxon>Bacillales</taxon>
        <taxon>Staphylococcaceae</taxon>
        <taxon>Staphylococcus</taxon>
    </lineage>
</organism>
<feature type="chain" id="PRO_1000079816" description="Large ribosomal subunit protein bL12">
    <location>
        <begin position="1"/>
        <end position="122"/>
    </location>
</feature>
<comment type="function">
    <text evidence="1">Forms part of the ribosomal stalk which helps the ribosome interact with GTP-bound translation factors. Is thus essential for accurate translation.</text>
</comment>
<comment type="subunit">
    <text evidence="1">Homodimer. Part of the ribosomal stalk of the 50S ribosomal subunit. Forms a multimeric L10(L12)X complex, where L10 forms an elongated spine to which 2 to 4 L12 dimers bind in a sequential fashion. Binds GTP-bound translation factors.</text>
</comment>
<comment type="similarity">
    <text evidence="1">Belongs to the bacterial ribosomal protein bL12 family.</text>
</comment>
<protein>
    <recommendedName>
        <fullName evidence="1">Large ribosomal subunit protein bL12</fullName>
    </recommendedName>
    <alternativeName>
        <fullName evidence="2">50S ribosomal protein L7/L12</fullName>
    </alternativeName>
</protein>
<sequence>MANHEQIIEAIKEMSVLELNDLVKAIEEEFGVTAAAPVAVAGAAGGADAAAEKTEFDVELTSAGSSKIKVVKAVKEATGLGLKDAKELVDGAPKVIKEALPKEEAEKLKEQLEEVGATVELK</sequence>
<evidence type="ECO:0000255" key="1">
    <source>
        <dbReference type="HAMAP-Rule" id="MF_00368"/>
    </source>
</evidence>
<evidence type="ECO:0000305" key="2"/>
<gene>
    <name evidence="1" type="primary">rplL</name>
    <name type="ordered locus">USA300HOU_0534</name>
</gene>
<dbReference type="EMBL" id="CP000730">
    <property type="protein sequence ID" value="ABX28560.1"/>
    <property type="molecule type" value="Genomic_DNA"/>
</dbReference>
<dbReference type="RefSeq" id="WP_001273586.1">
    <property type="nucleotide sequence ID" value="NC_010079.1"/>
</dbReference>
<dbReference type="SMR" id="A8YZN8"/>
<dbReference type="GeneID" id="98344874"/>
<dbReference type="KEGG" id="sax:USA300HOU_0534"/>
<dbReference type="HOGENOM" id="CLU_086499_3_2_9"/>
<dbReference type="GO" id="GO:0022625">
    <property type="term" value="C:cytosolic large ribosomal subunit"/>
    <property type="evidence" value="ECO:0007669"/>
    <property type="project" value="TreeGrafter"/>
</dbReference>
<dbReference type="GO" id="GO:0003729">
    <property type="term" value="F:mRNA binding"/>
    <property type="evidence" value="ECO:0007669"/>
    <property type="project" value="TreeGrafter"/>
</dbReference>
<dbReference type="GO" id="GO:0003735">
    <property type="term" value="F:structural constituent of ribosome"/>
    <property type="evidence" value="ECO:0007669"/>
    <property type="project" value="InterPro"/>
</dbReference>
<dbReference type="GO" id="GO:0006412">
    <property type="term" value="P:translation"/>
    <property type="evidence" value="ECO:0007669"/>
    <property type="project" value="UniProtKB-UniRule"/>
</dbReference>
<dbReference type="CDD" id="cd00387">
    <property type="entry name" value="Ribosomal_L7_L12"/>
    <property type="match status" value="1"/>
</dbReference>
<dbReference type="FunFam" id="1.20.5.710:FF:000002">
    <property type="entry name" value="50S ribosomal protein L7/L12"/>
    <property type="match status" value="1"/>
</dbReference>
<dbReference type="FunFam" id="3.30.1390.10:FF:000001">
    <property type="entry name" value="50S ribosomal protein L7/L12"/>
    <property type="match status" value="1"/>
</dbReference>
<dbReference type="Gene3D" id="3.30.1390.10">
    <property type="match status" value="1"/>
</dbReference>
<dbReference type="Gene3D" id="1.20.5.710">
    <property type="entry name" value="Single helix bin"/>
    <property type="match status" value="1"/>
</dbReference>
<dbReference type="HAMAP" id="MF_00368">
    <property type="entry name" value="Ribosomal_bL12"/>
    <property type="match status" value="1"/>
</dbReference>
<dbReference type="InterPro" id="IPR000206">
    <property type="entry name" value="Ribosomal_bL12"/>
</dbReference>
<dbReference type="InterPro" id="IPR013823">
    <property type="entry name" value="Ribosomal_bL12_C"/>
</dbReference>
<dbReference type="InterPro" id="IPR014719">
    <property type="entry name" value="Ribosomal_bL12_C/ClpS-like"/>
</dbReference>
<dbReference type="InterPro" id="IPR008932">
    <property type="entry name" value="Ribosomal_bL12_oligo"/>
</dbReference>
<dbReference type="InterPro" id="IPR036235">
    <property type="entry name" value="Ribosomal_bL12_oligo_N_sf"/>
</dbReference>
<dbReference type="NCBIfam" id="TIGR00855">
    <property type="entry name" value="L12"/>
    <property type="match status" value="1"/>
</dbReference>
<dbReference type="PANTHER" id="PTHR45987">
    <property type="entry name" value="39S RIBOSOMAL PROTEIN L12"/>
    <property type="match status" value="1"/>
</dbReference>
<dbReference type="PANTHER" id="PTHR45987:SF4">
    <property type="entry name" value="LARGE RIBOSOMAL SUBUNIT PROTEIN BL12M"/>
    <property type="match status" value="1"/>
</dbReference>
<dbReference type="Pfam" id="PF00542">
    <property type="entry name" value="Ribosomal_L12"/>
    <property type="match status" value="1"/>
</dbReference>
<dbReference type="Pfam" id="PF16320">
    <property type="entry name" value="Ribosomal_L12_N"/>
    <property type="match status" value="1"/>
</dbReference>
<dbReference type="SUPFAM" id="SSF54736">
    <property type="entry name" value="ClpS-like"/>
    <property type="match status" value="1"/>
</dbReference>
<dbReference type="SUPFAM" id="SSF48300">
    <property type="entry name" value="Ribosomal protein L7/12, oligomerisation (N-terminal) domain"/>
    <property type="match status" value="1"/>
</dbReference>
<keyword id="KW-0687">Ribonucleoprotein</keyword>
<keyword id="KW-0689">Ribosomal protein</keyword>
<proteinExistence type="inferred from homology"/>
<reference key="1">
    <citation type="journal article" date="2007" name="BMC Microbiol.">
        <title>Subtle genetic changes enhance virulence of methicillin resistant and sensitive Staphylococcus aureus.</title>
        <authorList>
            <person name="Highlander S.K."/>
            <person name="Hulten K.G."/>
            <person name="Qin X."/>
            <person name="Jiang H."/>
            <person name="Yerrapragada S."/>
            <person name="Mason E.O. Jr."/>
            <person name="Shang Y."/>
            <person name="Williams T.M."/>
            <person name="Fortunov R.M."/>
            <person name="Liu Y."/>
            <person name="Igboeli O."/>
            <person name="Petrosino J."/>
            <person name="Tirumalai M."/>
            <person name="Uzman A."/>
            <person name="Fox G.E."/>
            <person name="Cardenas A.M."/>
            <person name="Muzny D.M."/>
            <person name="Hemphill L."/>
            <person name="Ding Y."/>
            <person name="Dugan S."/>
            <person name="Blyth P.R."/>
            <person name="Buhay C.J."/>
            <person name="Dinh H.H."/>
            <person name="Hawes A.C."/>
            <person name="Holder M."/>
            <person name="Kovar C.L."/>
            <person name="Lee S.L."/>
            <person name="Liu W."/>
            <person name="Nazareth L.V."/>
            <person name="Wang Q."/>
            <person name="Zhou J."/>
            <person name="Kaplan S.L."/>
            <person name="Weinstock G.M."/>
        </authorList>
    </citation>
    <scope>NUCLEOTIDE SEQUENCE [LARGE SCALE GENOMIC DNA]</scope>
    <source>
        <strain>USA300 / TCH1516</strain>
    </source>
</reference>
<name>RL7_STAAT</name>
<accession>A8YZN8</accession>